<protein>
    <recommendedName>
        <fullName evidence="1">Membrane-bound lytic murein transglycosylase C</fullName>
        <ecNumber evidence="1">4.2.2.n1</ecNumber>
    </recommendedName>
    <alternativeName>
        <fullName evidence="1">Murein lyase C</fullName>
    </alternativeName>
</protein>
<sequence>MKKILALLVIAPLLVSCSGNKNQVENEVFVKDTNGFEILMGQFAHNIENIWGLKEVLIAGPKDYVKYTDQYQTRSHINFDAGTITIETIATTNPAAHLRQAIITTLLMGDDPGSIDLYSDVNDIQISKEPFLYGQVLDNNGEPIRWEWRAAHFADYLLQNKMQTRTSGLHVISFVTIQLVPNHLDKRAHKYLPLVRKSAARYGVEESLILAIMQTESSFNPYAVSRSDALGLMQVVQHTAGKDVFKLKGKSGQPSRSYLFDPENNIDAGTAYLSILQNTYLGGIQNATSRRYAVITSYNGGAGSVLRVFHSDKNKAVGIINTMSPGDVFQTLTTKHPSGESRRYLVKVNSAQKNYRRY</sequence>
<organism>
    <name type="scientific">Yersinia pestis</name>
    <dbReference type="NCBI Taxonomy" id="632"/>
    <lineage>
        <taxon>Bacteria</taxon>
        <taxon>Pseudomonadati</taxon>
        <taxon>Pseudomonadota</taxon>
        <taxon>Gammaproteobacteria</taxon>
        <taxon>Enterobacterales</taxon>
        <taxon>Yersiniaceae</taxon>
        <taxon>Yersinia</taxon>
    </lineage>
</organism>
<evidence type="ECO:0000255" key="1">
    <source>
        <dbReference type="HAMAP-Rule" id="MF_01616"/>
    </source>
</evidence>
<evidence type="ECO:0000305" key="2"/>
<gene>
    <name evidence="1" type="primary">mltC</name>
    <name type="ordered locus">YPO0954</name>
    <name type="ordered locus">y3341</name>
    <name type="ordered locus">YP_3487</name>
</gene>
<feature type="signal peptide" evidence="1">
    <location>
        <begin position="1"/>
        <end position="16"/>
    </location>
</feature>
<feature type="chain" id="PRO_0000032799" description="Membrane-bound lytic murein transglycosylase C">
    <location>
        <begin position="17"/>
        <end position="358"/>
    </location>
</feature>
<feature type="lipid moiety-binding region" description="N-palmitoyl cysteine" evidence="1">
    <location>
        <position position="17"/>
    </location>
</feature>
<feature type="lipid moiety-binding region" description="S-diacylglycerol cysteine" evidence="1">
    <location>
        <position position="17"/>
    </location>
</feature>
<name>MLTC_YERPE</name>
<reference key="1">
    <citation type="journal article" date="2001" name="Nature">
        <title>Genome sequence of Yersinia pestis, the causative agent of plague.</title>
        <authorList>
            <person name="Parkhill J."/>
            <person name="Wren B.W."/>
            <person name="Thomson N.R."/>
            <person name="Titball R.W."/>
            <person name="Holden M.T.G."/>
            <person name="Prentice M.B."/>
            <person name="Sebaihia M."/>
            <person name="James K.D."/>
            <person name="Churcher C.M."/>
            <person name="Mungall K.L."/>
            <person name="Baker S."/>
            <person name="Basham D."/>
            <person name="Bentley S.D."/>
            <person name="Brooks K."/>
            <person name="Cerdeno-Tarraga A.-M."/>
            <person name="Chillingworth T."/>
            <person name="Cronin A."/>
            <person name="Davies R.M."/>
            <person name="Davis P."/>
            <person name="Dougan G."/>
            <person name="Feltwell T."/>
            <person name="Hamlin N."/>
            <person name="Holroyd S."/>
            <person name="Jagels K."/>
            <person name="Karlyshev A.V."/>
            <person name="Leather S."/>
            <person name="Moule S."/>
            <person name="Oyston P.C.F."/>
            <person name="Quail M.A."/>
            <person name="Rutherford K.M."/>
            <person name="Simmonds M."/>
            <person name="Skelton J."/>
            <person name="Stevens K."/>
            <person name="Whitehead S."/>
            <person name="Barrell B.G."/>
        </authorList>
    </citation>
    <scope>NUCLEOTIDE SEQUENCE [LARGE SCALE GENOMIC DNA]</scope>
    <source>
        <strain>CO-92 / Biovar Orientalis</strain>
    </source>
</reference>
<reference key="2">
    <citation type="journal article" date="2002" name="J. Bacteriol.">
        <title>Genome sequence of Yersinia pestis KIM.</title>
        <authorList>
            <person name="Deng W."/>
            <person name="Burland V."/>
            <person name="Plunkett G. III"/>
            <person name="Boutin A."/>
            <person name="Mayhew G.F."/>
            <person name="Liss P."/>
            <person name="Perna N.T."/>
            <person name="Rose D.J."/>
            <person name="Mau B."/>
            <person name="Zhou S."/>
            <person name="Schwartz D.C."/>
            <person name="Fetherston J.D."/>
            <person name="Lindler L.E."/>
            <person name="Brubaker R.R."/>
            <person name="Plano G.V."/>
            <person name="Straley S.C."/>
            <person name="McDonough K.A."/>
            <person name="Nilles M.L."/>
            <person name="Matson J.S."/>
            <person name="Blattner F.R."/>
            <person name="Perry R.D."/>
        </authorList>
    </citation>
    <scope>NUCLEOTIDE SEQUENCE [LARGE SCALE GENOMIC DNA]</scope>
    <source>
        <strain>KIM10+ / Biovar Mediaevalis</strain>
    </source>
</reference>
<reference key="3">
    <citation type="journal article" date="2004" name="DNA Res.">
        <title>Complete genome sequence of Yersinia pestis strain 91001, an isolate avirulent to humans.</title>
        <authorList>
            <person name="Song Y."/>
            <person name="Tong Z."/>
            <person name="Wang J."/>
            <person name="Wang L."/>
            <person name="Guo Z."/>
            <person name="Han Y."/>
            <person name="Zhang J."/>
            <person name="Pei D."/>
            <person name="Zhou D."/>
            <person name="Qin H."/>
            <person name="Pang X."/>
            <person name="Han Y."/>
            <person name="Zhai J."/>
            <person name="Li M."/>
            <person name="Cui B."/>
            <person name="Qi Z."/>
            <person name="Jin L."/>
            <person name="Dai R."/>
            <person name="Chen F."/>
            <person name="Li S."/>
            <person name="Ye C."/>
            <person name="Du Z."/>
            <person name="Lin W."/>
            <person name="Wang J."/>
            <person name="Yu J."/>
            <person name="Yang H."/>
            <person name="Wang J."/>
            <person name="Huang P."/>
            <person name="Yang R."/>
        </authorList>
    </citation>
    <scope>NUCLEOTIDE SEQUENCE [LARGE SCALE GENOMIC DNA]</scope>
    <source>
        <strain>91001 / Biovar Mediaevalis</strain>
    </source>
</reference>
<accession>Q8ZHE6</accession>
<accession>Q0WI88</accession>
<accession>Q74QI2</accession>
<accession>Q7CGR3</accession>
<dbReference type="EC" id="4.2.2.n1" evidence="1"/>
<dbReference type="EMBL" id="AL590842">
    <property type="protein sequence ID" value="CAL19620.1"/>
    <property type="status" value="ALT_INIT"/>
    <property type="molecule type" value="Genomic_DNA"/>
</dbReference>
<dbReference type="EMBL" id="AE009952">
    <property type="protein sequence ID" value="AAM86891.1"/>
    <property type="status" value="ALT_INIT"/>
    <property type="molecule type" value="Genomic_DNA"/>
</dbReference>
<dbReference type="EMBL" id="AE017042">
    <property type="protein sequence ID" value="AAS63642.1"/>
    <property type="status" value="ALT_INIT"/>
    <property type="molecule type" value="Genomic_DNA"/>
</dbReference>
<dbReference type="PIR" id="AB0117">
    <property type="entry name" value="AB0117"/>
</dbReference>
<dbReference type="RefSeq" id="WP_002209995.1">
    <property type="nucleotide sequence ID" value="NZ_WUCM01000030.1"/>
</dbReference>
<dbReference type="SMR" id="Q8ZHE6"/>
<dbReference type="IntAct" id="Q8ZHE6">
    <property type="interactions" value="1"/>
</dbReference>
<dbReference type="STRING" id="214092.YPO0954"/>
<dbReference type="CAZy" id="GH23">
    <property type="family name" value="Glycoside Hydrolase Family 23"/>
</dbReference>
<dbReference type="PaxDb" id="214092-YPO0954"/>
<dbReference type="EnsemblBacteria" id="AAS63642">
    <property type="protein sequence ID" value="AAS63642"/>
    <property type="gene ID" value="YP_3487"/>
</dbReference>
<dbReference type="GeneID" id="57973687"/>
<dbReference type="KEGG" id="ype:YPO0954"/>
<dbReference type="KEGG" id="ypk:y3341"/>
<dbReference type="KEGG" id="ypm:YP_3487"/>
<dbReference type="eggNOG" id="COG0741">
    <property type="taxonomic scope" value="Bacteria"/>
</dbReference>
<dbReference type="HOGENOM" id="CLU_044583_0_0_6"/>
<dbReference type="OMA" id="AIMQIES"/>
<dbReference type="OrthoDB" id="5620293at2"/>
<dbReference type="Proteomes" id="UP000000815">
    <property type="component" value="Chromosome"/>
</dbReference>
<dbReference type="Proteomes" id="UP000001019">
    <property type="component" value="Chromosome"/>
</dbReference>
<dbReference type="Proteomes" id="UP000002490">
    <property type="component" value="Chromosome"/>
</dbReference>
<dbReference type="GO" id="GO:0009279">
    <property type="term" value="C:cell outer membrane"/>
    <property type="evidence" value="ECO:0007669"/>
    <property type="project" value="UniProtKB-SubCell"/>
</dbReference>
<dbReference type="GO" id="GO:0016798">
    <property type="term" value="F:hydrolase activity, acting on glycosyl bonds"/>
    <property type="evidence" value="ECO:0007669"/>
    <property type="project" value="InterPro"/>
</dbReference>
<dbReference type="GO" id="GO:0008933">
    <property type="term" value="F:peptidoglycan lytic transglycosylase activity"/>
    <property type="evidence" value="ECO:0007669"/>
    <property type="project" value="UniProtKB-UniRule"/>
</dbReference>
<dbReference type="GO" id="GO:0016998">
    <property type="term" value="P:cell wall macromolecule catabolic process"/>
    <property type="evidence" value="ECO:0007669"/>
    <property type="project" value="UniProtKB-UniRule"/>
</dbReference>
<dbReference type="GO" id="GO:0071555">
    <property type="term" value="P:cell wall organization"/>
    <property type="evidence" value="ECO:0007669"/>
    <property type="project" value="UniProtKB-KW"/>
</dbReference>
<dbReference type="GO" id="GO:0000270">
    <property type="term" value="P:peptidoglycan metabolic process"/>
    <property type="evidence" value="ECO:0007669"/>
    <property type="project" value="InterPro"/>
</dbReference>
<dbReference type="CDD" id="cd16893">
    <property type="entry name" value="LT_MltC_MltE"/>
    <property type="match status" value="1"/>
</dbReference>
<dbReference type="FunFam" id="1.10.530.10:FF:000002">
    <property type="entry name" value="Membrane-bound lytic murein transglycosylase C"/>
    <property type="match status" value="1"/>
</dbReference>
<dbReference type="Gene3D" id="1.10.530.10">
    <property type="match status" value="1"/>
</dbReference>
<dbReference type="HAMAP" id="MF_01616">
    <property type="entry name" value="MltC"/>
    <property type="match status" value="1"/>
</dbReference>
<dbReference type="InterPro" id="IPR023346">
    <property type="entry name" value="Lysozyme-like_dom_sf"/>
</dbReference>
<dbReference type="InterPro" id="IPR023664">
    <property type="entry name" value="Murein_transglycosylaseC"/>
</dbReference>
<dbReference type="InterPro" id="IPR024570">
    <property type="entry name" value="Murein_transglycosylaseC_N"/>
</dbReference>
<dbReference type="InterPro" id="IPR000189">
    <property type="entry name" value="Transglyc_AS"/>
</dbReference>
<dbReference type="InterPro" id="IPR008258">
    <property type="entry name" value="Transglycosylase_SLT_dom_1"/>
</dbReference>
<dbReference type="NCBIfam" id="NF008670">
    <property type="entry name" value="PRK11671.1"/>
    <property type="match status" value="1"/>
</dbReference>
<dbReference type="PANTHER" id="PTHR37423:SF2">
    <property type="entry name" value="MEMBRANE-BOUND LYTIC MUREIN TRANSGLYCOSYLASE C"/>
    <property type="match status" value="1"/>
</dbReference>
<dbReference type="PANTHER" id="PTHR37423">
    <property type="entry name" value="SOLUBLE LYTIC MUREIN TRANSGLYCOSYLASE-RELATED"/>
    <property type="match status" value="1"/>
</dbReference>
<dbReference type="Pfam" id="PF11873">
    <property type="entry name" value="Mltc_N"/>
    <property type="match status" value="1"/>
</dbReference>
<dbReference type="Pfam" id="PF01464">
    <property type="entry name" value="SLT"/>
    <property type="match status" value="1"/>
</dbReference>
<dbReference type="SUPFAM" id="SSF53955">
    <property type="entry name" value="Lysozyme-like"/>
    <property type="match status" value="1"/>
</dbReference>
<dbReference type="PROSITE" id="PS51257">
    <property type="entry name" value="PROKAR_LIPOPROTEIN"/>
    <property type="match status" value="1"/>
</dbReference>
<dbReference type="PROSITE" id="PS00922">
    <property type="entry name" value="TRANSGLYCOSYLASE"/>
    <property type="match status" value="1"/>
</dbReference>
<keyword id="KW-0998">Cell outer membrane</keyword>
<keyword id="KW-0961">Cell wall biogenesis/degradation</keyword>
<keyword id="KW-0449">Lipoprotein</keyword>
<keyword id="KW-0456">Lyase</keyword>
<keyword id="KW-0472">Membrane</keyword>
<keyword id="KW-0564">Palmitate</keyword>
<keyword id="KW-1185">Reference proteome</keyword>
<keyword id="KW-0732">Signal</keyword>
<comment type="function">
    <text evidence="1">Murein-degrading enzyme. May play a role in recycling of muropeptides during cell elongation and/or cell division.</text>
</comment>
<comment type="catalytic activity">
    <reaction evidence="1">
        <text>Exolytic cleavage of the (1-&gt;4)-beta-glycosidic linkage between N-acetylmuramic acid (MurNAc) and N-acetylglucosamine (GlcNAc) residues in peptidoglycan, from either the reducing or the non-reducing ends of the peptidoglycan chains, with concomitant formation of a 1,6-anhydrobond in the MurNAc residue.</text>
        <dbReference type="EC" id="4.2.2.n1"/>
    </reaction>
</comment>
<comment type="subcellular location">
    <subcellularLocation>
        <location evidence="1">Cell outer membrane</location>
        <topology evidence="1">Lipid-anchor</topology>
    </subcellularLocation>
</comment>
<comment type="similarity">
    <text evidence="1">Belongs to the transglycosylase Slt family.</text>
</comment>
<comment type="sequence caution" evidence="2">
    <conflict type="erroneous initiation">
        <sequence resource="EMBL-CDS" id="AAM86891"/>
    </conflict>
</comment>
<comment type="sequence caution" evidence="2">
    <conflict type="erroneous initiation">
        <sequence resource="EMBL-CDS" id="AAS63642"/>
    </conflict>
</comment>
<comment type="sequence caution" evidence="2">
    <conflict type="erroneous initiation">
        <sequence resource="EMBL-CDS" id="CAL19620"/>
    </conflict>
</comment>
<proteinExistence type="inferred from homology"/>